<keyword id="KW-0963">Cytoplasm</keyword>
<keyword id="KW-0489">Methyltransferase</keyword>
<keyword id="KW-1185">Reference proteome</keyword>
<keyword id="KW-0698">rRNA processing</keyword>
<keyword id="KW-0949">S-adenosyl-L-methionine</keyword>
<keyword id="KW-0808">Transferase</keyword>
<comment type="function">
    <text evidence="1">Specifically methylates the pseudouridine at position 1915 (m3Psi1915) in 23S rRNA.</text>
</comment>
<comment type="catalytic activity">
    <reaction evidence="1">
        <text>pseudouridine(1915) in 23S rRNA + S-adenosyl-L-methionine = N(3)-methylpseudouridine(1915) in 23S rRNA + S-adenosyl-L-homocysteine + H(+)</text>
        <dbReference type="Rhea" id="RHEA:42752"/>
        <dbReference type="Rhea" id="RHEA-COMP:10221"/>
        <dbReference type="Rhea" id="RHEA-COMP:10222"/>
        <dbReference type="ChEBI" id="CHEBI:15378"/>
        <dbReference type="ChEBI" id="CHEBI:57856"/>
        <dbReference type="ChEBI" id="CHEBI:59789"/>
        <dbReference type="ChEBI" id="CHEBI:65314"/>
        <dbReference type="ChEBI" id="CHEBI:74486"/>
        <dbReference type="EC" id="2.1.1.177"/>
    </reaction>
</comment>
<comment type="subunit">
    <text evidence="1">Homodimer.</text>
</comment>
<comment type="subcellular location">
    <subcellularLocation>
        <location evidence="1">Cytoplasm</location>
    </subcellularLocation>
</comment>
<comment type="similarity">
    <text evidence="1">Belongs to the RNA methyltransferase RlmH family.</text>
</comment>
<protein>
    <recommendedName>
        <fullName evidence="1">Ribosomal RNA large subunit methyltransferase H</fullName>
        <ecNumber evidence="1">2.1.1.177</ecNumber>
    </recommendedName>
    <alternativeName>
        <fullName evidence="1">23S rRNA (pseudouridine1915-N3)-methyltransferase</fullName>
    </alternativeName>
    <alternativeName>
        <fullName evidence="1">23S rRNA m3Psi1915 methyltransferase</fullName>
    </alternativeName>
    <alternativeName>
        <fullName evidence="1">rRNA (pseudouridine-N3-)-methyltransferase RlmH</fullName>
    </alternativeName>
</protein>
<feature type="chain" id="PRO_1000212461" description="Ribosomal RNA large subunit methyltransferase H">
    <location>
        <begin position="1"/>
        <end position="160"/>
    </location>
</feature>
<feature type="binding site" evidence="1">
    <location>
        <position position="76"/>
    </location>
    <ligand>
        <name>S-adenosyl-L-methionine</name>
        <dbReference type="ChEBI" id="CHEBI:59789"/>
    </ligand>
</feature>
<feature type="binding site" evidence="1">
    <location>
        <position position="108"/>
    </location>
    <ligand>
        <name>S-adenosyl-L-methionine</name>
        <dbReference type="ChEBI" id="CHEBI:59789"/>
    </ligand>
</feature>
<feature type="binding site" evidence="1">
    <location>
        <begin position="127"/>
        <end position="132"/>
    </location>
    <ligand>
        <name>S-adenosyl-L-methionine</name>
        <dbReference type="ChEBI" id="CHEBI:59789"/>
    </ligand>
</feature>
<reference key="1">
    <citation type="journal article" date="2010" name="J. Bacteriol.">
        <title>Complete genome sequence of the aerobic facultative methanotroph Methylocella silvestris BL2.</title>
        <authorList>
            <person name="Chen Y."/>
            <person name="Crombie A."/>
            <person name="Rahman M.T."/>
            <person name="Dedysh S.N."/>
            <person name="Liesack W."/>
            <person name="Stott M.B."/>
            <person name="Alam M."/>
            <person name="Theisen A.R."/>
            <person name="Murrell J.C."/>
            <person name="Dunfield P.F."/>
        </authorList>
    </citation>
    <scope>NUCLEOTIDE SEQUENCE [LARGE SCALE GENOMIC DNA]</scope>
    <source>
        <strain>DSM 15510 / CIP 108128 / LMG 27833 / NCIMB 13906 / BL2</strain>
    </source>
</reference>
<dbReference type="EC" id="2.1.1.177" evidence="1"/>
<dbReference type="EMBL" id="CP001280">
    <property type="protein sequence ID" value="ACK49619.1"/>
    <property type="molecule type" value="Genomic_DNA"/>
</dbReference>
<dbReference type="RefSeq" id="WP_012589689.1">
    <property type="nucleotide sequence ID" value="NC_011666.1"/>
</dbReference>
<dbReference type="SMR" id="B8ENA6"/>
<dbReference type="STRING" id="395965.Msil_0647"/>
<dbReference type="KEGG" id="msl:Msil_0647"/>
<dbReference type="eggNOG" id="COG1576">
    <property type="taxonomic scope" value="Bacteria"/>
</dbReference>
<dbReference type="HOGENOM" id="CLU_100552_1_1_5"/>
<dbReference type="OrthoDB" id="9806643at2"/>
<dbReference type="Proteomes" id="UP000002257">
    <property type="component" value="Chromosome"/>
</dbReference>
<dbReference type="GO" id="GO:0005737">
    <property type="term" value="C:cytoplasm"/>
    <property type="evidence" value="ECO:0007669"/>
    <property type="project" value="UniProtKB-SubCell"/>
</dbReference>
<dbReference type="GO" id="GO:0070038">
    <property type="term" value="F:rRNA (pseudouridine-N3-)-methyltransferase activity"/>
    <property type="evidence" value="ECO:0007669"/>
    <property type="project" value="UniProtKB-UniRule"/>
</dbReference>
<dbReference type="CDD" id="cd18081">
    <property type="entry name" value="RlmH-like"/>
    <property type="match status" value="1"/>
</dbReference>
<dbReference type="Gene3D" id="3.40.1280.10">
    <property type="match status" value="1"/>
</dbReference>
<dbReference type="HAMAP" id="MF_00658">
    <property type="entry name" value="23SrRNA_methyltr_H"/>
    <property type="match status" value="1"/>
</dbReference>
<dbReference type="InterPro" id="IPR029028">
    <property type="entry name" value="Alpha/beta_knot_MTases"/>
</dbReference>
<dbReference type="InterPro" id="IPR003742">
    <property type="entry name" value="RlmH-like"/>
</dbReference>
<dbReference type="InterPro" id="IPR029026">
    <property type="entry name" value="tRNA_m1G_MTases_N"/>
</dbReference>
<dbReference type="NCBIfam" id="NF000989">
    <property type="entry name" value="PRK00103.2-3"/>
    <property type="match status" value="1"/>
</dbReference>
<dbReference type="PANTHER" id="PTHR33603">
    <property type="entry name" value="METHYLTRANSFERASE"/>
    <property type="match status" value="1"/>
</dbReference>
<dbReference type="PANTHER" id="PTHR33603:SF1">
    <property type="entry name" value="RIBOSOMAL RNA LARGE SUBUNIT METHYLTRANSFERASE H"/>
    <property type="match status" value="1"/>
</dbReference>
<dbReference type="Pfam" id="PF02590">
    <property type="entry name" value="SPOUT_MTase"/>
    <property type="match status" value="1"/>
</dbReference>
<dbReference type="PIRSF" id="PIRSF004505">
    <property type="entry name" value="MT_bac"/>
    <property type="match status" value="1"/>
</dbReference>
<dbReference type="SUPFAM" id="SSF75217">
    <property type="entry name" value="alpha/beta knot"/>
    <property type="match status" value="1"/>
</dbReference>
<gene>
    <name evidence="1" type="primary">rlmH</name>
    <name type="ordered locus">Msil_0647</name>
</gene>
<evidence type="ECO:0000255" key="1">
    <source>
        <dbReference type="HAMAP-Rule" id="MF_00658"/>
    </source>
</evidence>
<accession>B8ENA6</accession>
<name>RLMH_METSB</name>
<proteinExistence type="inferred from homology"/>
<sequence length="160" mass="17263">MRLILLCVGRCKAGPETELSQRYIERANAAGRALGFPRVELREFDESRAREPALRKAAEAKTILASLSPGARLVALDESGALVSSREFSAFLGKTRDEGAPALTLAIGGADGLSGEILEAASPIVSFGRMTFPHQLVRIMAAEQLYRAMTILAGHPYHRD</sequence>
<organism>
    <name type="scientific">Methylocella silvestris (strain DSM 15510 / CIP 108128 / LMG 27833 / NCIMB 13906 / BL2)</name>
    <dbReference type="NCBI Taxonomy" id="395965"/>
    <lineage>
        <taxon>Bacteria</taxon>
        <taxon>Pseudomonadati</taxon>
        <taxon>Pseudomonadota</taxon>
        <taxon>Alphaproteobacteria</taxon>
        <taxon>Hyphomicrobiales</taxon>
        <taxon>Beijerinckiaceae</taxon>
        <taxon>Methylocella</taxon>
    </lineage>
</organism>